<proteinExistence type="evidence at transcript level"/>
<keyword id="KW-1017">Isopeptide bond</keyword>
<keyword id="KW-0539">Nucleus</keyword>
<keyword id="KW-0597">Phosphoprotein</keyword>
<keyword id="KW-1185">Reference proteome</keyword>
<keyword id="KW-0690">Ribosome biogenesis</keyword>
<keyword id="KW-0698">rRNA processing</keyword>
<keyword id="KW-0832">Ubl conjugation</keyword>
<reference key="1">
    <citation type="submission" date="2006-09" db="EMBL/GenBank/DDBJ databases">
        <authorList>
            <consortium name="NIH - Mammalian Gene Collection (MGC) project"/>
        </authorList>
    </citation>
    <scope>NUCLEOTIDE SEQUENCE [LARGE SCALE MRNA]</scope>
    <source>
        <strain>Hereford</strain>
        <tissue>Fetal cerebellum</tissue>
    </source>
</reference>
<evidence type="ECO:0000250" key="1"/>
<evidence type="ECO:0000250" key="2">
    <source>
        <dbReference type="UniProtKB" id="Q9BRU9"/>
    </source>
</evidence>
<evidence type="ECO:0000256" key="3">
    <source>
        <dbReference type="SAM" id="MobiDB-lite"/>
    </source>
</evidence>
<evidence type="ECO:0000305" key="4"/>
<organism>
    <name type="scientific">Bos taurus</name>
    <name type="common">Bovine</name>
    <dbReference type="NCBI Taxonomy" id="9913"/>
    <lineage>
        <taxon>Eukaryota</taxon>
        <taxon>Metazoa</taxon>
        <taxon>Chordata</taxon>
        <taxon>Craniata</taxon>
        <taxon>Vertebrata</taxon>
        <taxon>Euteleostomi</taxon>
        <taxon>Mammalia</taxon>
        <taxon>Eutheria</taxon>
        <taxon>Laurasiatheria</taxon>
        <taxon>Artiodactyla</taxon>
        <taxon>Ruminantia</taxon>
        <taxon>Pecora</taxon>
        <taxon>Bovidae</taxon>
        <taxon>Bovinae</taxon>
        <taxon>Bos</taxon>
    </lineage>
</organism>
<gene>
    <name type="primary">UTP23</name>
</gene>
<feature type="chain" id="PRO_0000285633" description="rRNA-processing protein UTP23 homolog">
    <location>
        <begin position="1"/>
        <end position="248"/>
    </location>
</feature>
<feature type="region of interest" description="Disordered" evidence="3">
    <location>
        <begin position="177"/>
        <end position="248"/>
    </location>
</feature>
<feature type="compositionally biased region" description="Basic and acidic residues" evidence="3">
    <location>
        <begin position="177"/>
        <end position="190"/>
    </location>
</feature>
<feature type="compositionally biased region" description="Basic residues" evidence="3">
    <location>
        <begin position="224"/>
        <end position="235"/>
    </location>
</feature>
<feature type="modified residue" description="Phosphoserine" evidence="2">
    <location>
        <position position="174"/>
    </location>
</feature>
<feature type="cross-link" description="Glycyl lysine isopeptide (Lys-Gly) (interchain with G-Cter in SUMO2)" evidence="2">
    <location>
        <position position="179"/>
    </location>
</feature>
<sequence length="248" mass="28409">MKITRQKHAKKHLGFFRNNFGVREPYQILLDGTFCQAALRGRIQLREQLPRYLMAETQLCTTRCVLKELETLGKDLYGAKLIAQKCQVRNCPHFKNAVSGSECLLSMVEDGNPHHYFLATQDQNLSMKVKKKPGIPLMFIIQNTIVLDKPSPKTIAFVKAVESGQLVSVHEKQSIRQLKEEQGLVKDPEQRRRKKRKKVSGPNPLSCLKKKKKTQDTNSSASEKKRKRKRIRNRSTSKVLSEKQNAEG</sequence>
<comment type="function">
    <text evidence="1">Involved in rRNA-processing and ribosome biogenesis.</text>
</comment>
<comment type="subcellular location">
    <subcellularLocation>
        <location evidence="1">Nucleus</location>
        <location evidence="1">Nucleolus</location>
    </subcellularLocation>
</comment>
<comment type="similarity">
    <text evidence="4">Belongs to the UTP23/FCF1 family. UTP23 subfamily.</text>
</comment>
<accession>Q08DU1</accession>
<name>UTP23_BOVIN</name>
<protein>
    <recommendedName>
        <fullName>rRNA-processing protein UTP23 homolog</fullName>
    </recommendedName>
</protein>
<dbReference type="EMBL" id="BC123565">
    <property type="protein sequence ID" value="AAI23566.1"/>
    <property type="molecule type" value="mRNA"/>
</dbReference>
<dbReference type="RefSeq" id="NP_001069507.1">
    <property type="nucleotide sequence ID" value="NM_001076039.1"/>
</dbReference>
<dbReference type="SMR" id="Q08DU1"/>
<dbReference type="FunCoup" id="Q08DU1">
    <property type="interactions" value="3213"/>
</dbReference>
<dbReference type="STRING" id="9913.ENSBTAP00000043790"/>
<dbReference type="PaxDb" id="9913-ENSBTAP00000043790"/>
<dbReference type="GeneID" id="534858"/>
<dbReference type="KEGG" id="bta:534858"/>
<dbReference type="CTD" id="84294"/>
<dbReference type="eggNOG" id="KOG3164">
    <property type="taxonomic scope" value="Eukaryota"/>
</dbReference>
<dbReference type="InParanoid" id="Q08DU1"/>
<dbReference type="OrthoDB" id="25675at2759"/>
<dbReference type="BRENDA" id="3.1.1.77">
    <property type="organism ID" value="908"/>
</dbReference>
<dbReference type="Proteomes" id="UP000009136">
    <property type="component" value="Unplaced"/>
</dbReference>
<dbReference type="GO" id="GO:0005730">
    <property type="term" value="C:nucleolus"/>
    <property type="evidence" value="ECO:0000318"/>
    <property type="project" value="GO_Central"/>
</dbReference>
<dbReference type="GO" id="GO:0032040">
    <property type="term" value="C:small-subunit processome"/>
    <property type="evidence" value="ECO:0000318"/>
    <property type="project" value="GO_Central"/>
</dbReference>
<dbReference type="GO" id="GO:0070181">
    <property type="term" value="F:small ribosomal subunit rRNA binding"/>
    <property type="evidence" value="ECO:0000318"/>
    <property type="project" value="GO_Central"/>
</dbReference>
<dbReference type="GO" id="GO:0006364">
    <property type="term" value="P:rRNA processing"/>
    <property type="evidence" value="ECO:0007669"/>
    <property type="project" value="UniProtKB-KW"/>
</dbReference>
<dbReference type="CDD" id="cd09866">
    <property type="entry name" value="PIN_Fcf1-Utp23-H"/>
    <property type="match status" value="1"/>
</dbReference>
<dbReference type="FunFam" id="3.40.50.1010:FF:000006">
    <property type="entry name" value="rRNA-processing protein UTP23 homolog"/>
    <property type="match status" value="1"/>
</dbReference>
<dbReference type="Gene3D" id="3.40.50.1010">
    <property type="entry name" value="5'-nuclease"/>
    <property type="match status" value="1"/>
</dbReference>
<dbReference type="InterPro" id="IPR006984">
    <property type="entry name" value="Fcf1/Utp23"/>
</dbReference>
<dbReference type="InterPro" id="IPR029060">
    <property type="entry name" value="PIN-like_dom_sf"/>
</dbReference>
<dbReference type="PANTHER" id="PTHR12416">
    <property type="entry name" value="RRNA-PROCESSING PROTEIN UTP23 HOMOLOG"/>
    <property type="match status" value="1"/>
</dbReference>
<dbReference type="Pfam" id="PF04900">
    <property type="entry name" value="Fcf1"/>
    <property type="match status" value="1"/>
</dbReference>
<dbReference type="Pfam" id="PF24779">
    <property type="entry name" value="UTP23_sensor"/>
    <property type="match status" value="1"/>
</dbReference>
<dbReference type="SUPFAM" id="SSF88723">
    <property type="entry name" value="PIN domain-like"/>
    <property type="match status" value="1"/>
</dbReference>